<accession>Q8WTQ7</accession>
<keyword id="KW-0067">ATP-binding</keyword>
<keyword id="KW-0418">Kinase</keyword>
<keyword id="KW-0449">Lipoprotein</keyword>
<keyword id="KW-0472">Membrane</keyword>
<keyword id="KW-0488">Methylation</keyword>
<keyword id="KW-0547">Nucleotide-binding</keyword>
<keyword id="KW-0597">Phosphoprotein</keyword>
<keyword id="KW-0636">Prenylation</keyword>
<keyword id="KW-1267">Proteomics identification</keyword>
<keyword id="KW-1185">Reference proteome</keyword>
<keyword id="KW-0716">Sensory transduction</keyword>
<keyword id="KW-0723">Serine/threonine-protein kinase</keyword>
<keyword id="KW-0808">Transferase</keyword>
<keyword id="KW-0844">Vision</keyword>
<proteinExistence type="evidence at protein level"/>
<name>GRK7_HUMAN</name>
<reference key="1">
    <citation type="journal article" date="2001" name="Mol. Vis.">
        <title>Characterization of human GRK7 as a potential cone opsin kinase.</title>
        <authorList>
            <person name="Chen C.-K."/>
            <person name="Zhang K."/>
            <person name="Church-Kopish J."/>
            <person name="Huang W."/>
            <person name="Zhang H."/>
            <person name="Chen Y.-J."/>
            <person name="Frederick J.M."/>
            <person name="Baehr W."/>
        </authorList>
    </citation>
    <scope>NUCLEOTIDE SEQUENCE [MRNA]</scope>
    <scope>TISSUE SPECIFICITY</scope>
    <source>
        <tissue>Retina</tissue>
    </source>
</reference>
<reference key="2">
    <citation type="journal article" date="2001" name="J. Neurosci.">
        <title>Species-specific differences in expression of G-protein-coupled receptor kinase (GRK) 7 and GRK1 in mammalian cone photoreceptor cells: implications for cone cell phototransduction.</title>
        <authorList>
            <person name="Weiss E.R."/>
            <person name="Ducceschi M.H."/>
            <person name="Horner T.J."/>
            <person name="Li A."/>
            <person name="Craft C.M."/>
            <person name="Osawa S."/>
        </authorList>
    </citation>
    <scope>NUCLEOTIDE SEQUENCE [MRNA]</scope>
    <source>
        <tissue>Retina</tissue>
    </source>
</reference>
<reference key="3">
    <citation type="journal article" date="2006" name="Nature">
        <title>The DNA sequence, annotation and analysis of human chromosome 3.</title>
        <authorList>
            <person name="Muzny D.M."/>
            <person name="Scherer S.E."/>
            <person name="Kaul R."/>
            <person name="Wang J."/>
            <person name="Yu J."/>
            <person name="Sudbrak R."/>
            <person name="Buhay C.J."/>
            <person name="Chen R."/>
            <person name="Cree A."/>
            <person name="Ding Y."/>
            <person name="Dugan-Rocha S."/>
            <person name="Gill R."/>
            <person name="Gunaratne P."/>
            <person name="Harris R.A."/>
            <person name="Hawes A.C."/>
            <person name="Hernandez J."/>
            <person name="Hodgson A.V."/>
            <person name="Hume J."/>
            <person name="Jackson A."/>
            <person name="Khan Z.M."/>
            <person name="Kovar-Smith C."/>
            <person name="Lewis L.R."/>
            <person name="Lozado R.J."/>
            <person name="Metzker M.L."/>
            <person name="Milosavljevic A."/>
            <person name="Miner G.R."/>
            <person name="Morgan M.B."/>
            <person name="Nazareth L.V."/>
            <person name="Scott G."/>
            <person name="Sodergren E."/>
            <person name="Song X.-Z."/>
            <person name="Steffen D."/>
            <person name="Wei S."/>
            <person name="Wheeler D.A."/>
            <person name="Wright M.W."/>
            <person name="Worley K.C."/>
            <person name="Yuan Y."/>
            <person name="Zhang Z."/>
            <person name="Adams C.Q."/>
            <person name="Ansari-Lari M.A."/>
            <person name="Ayele M."/>
            <person name="Brown M.J."/>
            <person name="Chen G."/>
            <person name="Chen Z."/>
            <person name="Clendenning J."/>
            <person name="Clerc-Blankenburg K.P."/>
            <person name="Chen R."/>
            <person name="Chen Z."/>
            <person name="Davis C."/>
            <person name="Delgado O."/>
            <person name="Dinh H.H."/>
            <person name="Dong W."/>
            <person name="Draper H."/>
            <person name="Ernst S."/>
            <person name="Fu G."/>
            <person name="Gonzalez-Garay M.L."/>
            <person name="Garcia D.K."/>
            <person name="Gillett W."/>
            <person name="Gu J."/>
            <person name="Hao B."/>
            <person name="Haugen E."/>
            <person name="Havlak P."/>
            <person name="He X."/>
            <person name="Hennig S."/>
            <person name="Hu S."/>
            <person name="Huang W."/>
            <person name="Jackson L.R."/>
            <person name="Jacob L.S."/>
            <person name="Kelly S.H."/>
            <person name="Kube M."/>
            <person name="Levy R."/>
            <person name="Li Z."/>
            <person name="Liu B."/>
            <person name="Liu J."/>
            <person name="Liu W."/>
            <person name="Lu J."/>
            <person name="Maheshwari M."/>
            <person name="Nguyen B.-V."/>
            <person name="Okwuonu G.O."/>
            <person name="Palmeiri A."/>
            <person name="Pasternak S."/>
            <person name="Perez L.M."/>
            <person name="Phelps K.A."/>
            <person name="Plopper F.J."/>
            <person name="Qiang B."/>
            <person name="Raymond C."/>
            <person name="Rodriguez R."/>
            <person name="Saenphimmachak C."/>
            <person name="Santibanez J."/>
            <person name="Shen H."/>
            <person name="Shen Y."/>
            <person name="Subramanian S."/>
            <person name="Tabor P.E."/>
            <person name="Verduzco D."/>
            <person name="Waldron L."/>
            <person name="Wang J."/>
            <person name="Wang J."/>
            <person name="Wang Q."/>
            <person name="Williams G.A."/>
            <person name="Wong G.K.-S."/>
            <person name="Yao Z."/>
            <person name="Zhang J."/>
            <person name="Zhang X."/>
            <person name="Zhao G."/>
            <person name="Zhou J."/>
            <person name="Zhou Y."/>
            <person name="Nelson D."/>
            <person name="Lehrach H."/>
            <person name="Reinhardt R."/>
            <person name="Naylor S.L."/>
            <person name="Yang H."/>
            <person name="Olson M."/>
            <person name="Weinstock G."/>
            <person name="Gibbs R.A."/>
        </authorList>
    </citation>
    <scope>NUCLEOTIDE SEQUENCE [LARGE SCALE GENOMIC DNA]</scope>
</reference>
<reference key="4">
    <citation type="journal article" date="2005" name="J. Biol. Chem.">
        <title>Phosphorylation of GRK1 and GRK7 by cAMP-dependent protein kinase attenuates their enzymatic activities.</title>
        <authorList>
            <person name="Horner T.J."/>
            <person name="Osawa S."/>
            <person name="Schaller M.D."/>
            <person name="Weiss E.R."/>
        </authorList>
    </citation>
    <scope>BIOPHYSICOCHEMICAL PROPERTIES</scope>
    <scope>CATALYTIC ACTIVITY</scope>
    <scope>FUNCTION IN PHOSPHORYLATION OF RHO</scope>
    <scope>ACTIVITY REGULATION</scope>
    <scope>AUTOPHOSPHORYLATION</scope>
    <scope>MUTAGENESIS OF SER-23 AND SER-36</scope>
</reference>
<reference key="5">
    <citation type="journal article" date="2008" name="J. Neurochem.">
        <title>Phosphorylation of GRK7 by PKA in cone photoreceptor cells is regulated by light.</title>
        <authorList>
            <person name="Osawa S."/>
            <person name="Jo R."/>
            <person name="Weiss E.R."/>
        </authorList>
    </citation>
    <scope>TISSUE SPECIFICITY</scope>
    <scope>PHOSPHORYLATION AT SER-36</scope>
</reference>
<reference key="6">
    <citation type="journal article" date="2007" name="Nature">
        <title>Patterns of somatic mutation in human cancer genomes.</title>
        <authorList>
            <person name="Greenman C."/>
            <person name="Stephens P."/>
            <person name="Smith R."/>
            <person name="Dalgliesh G.L."/>
            <person name="Hunter C."/>
            <person name="Bignell G."/>
            <person name="Davies H."/>
            <person name="Teague J."/>
            <person name="Butler A."/>
            <person name="Stevens C."/>
            <person name="Edkins S."/>
            <person name="O'Meara S."/>
            <person name="Vastrik I."/>
            <person name="Schmidt E.E."/>
            <person name="Avis T."/>
            <person name="Barthorpe S."/>
            <person name="Bhamra G."/>
            <person name="Buck G."/>
            <person name="Choudhury B."/>
            <person name="Clements J."/>
            <person name="Cole J."/>
            <person name="Dicks E."/>
            <person name="Forbes S."/>
            <person name="Gray K."/>
            <person name="Halliday K."/>
            <person name="Harrison R."/>
            <person name="Hills K."/>
            <person name="Hinton J."/>
            <person name="Jenkinson A."/>
            <person name="Jones D."/>
            <person name="Menzies A."/>
            <person name="Mironenko T."/>
            <person name="Perry J."/>
            <person name="Raine K."/>
            <person name="Richardson D."/>
            <person name="Shepherd R."/>
            <person name="Small A."/>
            <person name="Tofts C."/>
            <person name="Varian J."/>
            <person name="Webb T."/>
            <person name="West S."/>
            <person name="Widaa S."/>
            <person name="Yates A."/>
            <person name="Cahill D.P."/>
            <person name="Louis D.N."/>
            <person name="Goldstraw P."/>
            <person name="Nicholson A.G."/>
            <person name="Brasseur F."/>
            <person name="Looijenga L."/>
            <person name="Weber B.L."/>
            <person name="Chiew Y.-E."/>
            <person name="DeFazio A."/>
            <person name="Greaves M.F."/>
            <person name="Green A.R."/>
            <person name="Campbell P."/>
            <person name="Birney E."/>
            <person name="Easton D.F."/>
            <person name="Chenevix-Trench G."/>
            <person name="Tan M.-H."/>
            <person name="Khoo S.K."/>
            <person name="Teh B.T."/>
            <person name="Yuen S.T."/>
            <person name="Leung S.Y."/>
            <person name="Wooster R."/>
            <person name="Futreal P.A."/>
            <person name="Stratton M.R."/>
        </authorList>
    </citation>
    <scope>VARIANTS [LARGE SCALE ANALYSIS] HIS-81; TRP-113; CYS-115; THR-127; GLY-196; MET-196; TRP-226; PHE-253; GLN-309; ILE-313; GLY-443 AND THR-460</scope>
</reference>
<feature type="chain" id="PRO_0000024332" description="Rhodopsin kinase GRK7">
    <location>
        <begin position="1"/>
        <end position="550"/>
    </location>
</feature>
<feature type="propeptide" id="PRO_0000024333" description="Removed in mature form" evidence="1">
    <location>
        <begin position="551"/>
        <end position="553"/>
    </location>
</feature>
<feature type="domain" description="RGS" evidence="5">
    <location>
        <begin position="56"/>
        <end position="176"/>
    </location>
</feature>
<feature type="domain" description="Protein kinase" evidence="4">
    <location>
        <begin position="191"/>
        <end position="454"/>
    </location>
</feature>
<feature type="domain" description="AGC-kinase C-terminal" evidence="6">
    <location>
        <begin position="455"/>
        <end position="520"/>
    </location>
</feature>
<feature type="active site" description="Proton acceptor" evidence="4 7">
    <location>
        <position position="316"/>
    </location>
</feature>
<feature type="binding site" evidence="4">
    <location>
        <begin position="197"/>
        <end position="205"/>
    </location>
    <ligand>
        <name>ATP</name>
        <dbReference type="ChEBI" id="CHEBI:30616"/>
    </ligand>
</feature>
<feature type="binding site" evidence="4">
    <location>
        <position position="220"/>
    </location>
    <ligand>
        <name>ATP</name>
        <dbReference type="ChEBI" id="CHEBI:30616"/>
    </ligand>
</feature>
<feature type="modified residue" description="Phosphoserine; by PKA" evidence="11">
    <location>
        <position position="36"/>
    </location>
</feature>
<feature type="modified residue" description="Cysteine methyl ester" evidence="3">
    <location>
        <position position="550"/>
    </location>
</feature>
<feature type="lipid moiety-binding region" description="S-geranylgeranyl cysteine" evidence="3">
    <location>
        <position position="550"/>
    </location>
</feature>
<feature type="sequence variant" id="VAR_040527" description="In dbSNP:rs34429284." evidence="10">
    <original>R</original>
    <variation>H</variation>
    <location>
        <position position="81"/>
    </location>
</feature>
<feature type="sequence variant" id="VAR_040528" description="In dbSNP:rs56070798." evidence="10">
    <original>C</original>
    <variation>W</variation>
    <location>
        <position position="113"/>
    </location>
</feature>
<feature type="sequence variant" id="VAR_040529" description="In dbSNP:rs34769632." evidence="10">
    <original>S</original>
    <variation>C</variation>
    <location>
        <position position="115"/>
    </location>
</feature>
<feature type="sequence variant" id="VAR_040530" description="In dbSNP:rs35318124." evidence="10">
    <original>S</original>
    <variation>T</variation>
    <location>
        <position position="127"/>
    </location>
</feature>
<feature type="sequence variant" id="VAR_040531" description="In dbSNP:rs55707760." evidence="10">
    <original>V</original>
    <variation>G</variation>
    <location>
        <position position="196"/>
    </location>
</feature>
<feature type="sequence variant" id="VAR_040532" description="In dbSNP:rs56019094." evidence="10">
    <original>V</original>
    <variation>M</variation>
    <location>
        <position position="196"/>
    </location>
</feature>
<feature type="sequence variant" id="VAR_040533" description="In dbSNP:rs35566288." evidence="10">
    <original>R</original>
    <variation>W</variation>
    <location>
        <position position="226"/>
    </location>
</feature>
<feature type="sequence variant" id="VAR_040534" description="In a metastatic melanoma sample; somatic mutation." evidence="10">
    <original>S</original>
    <variation>F</variation>
    <location>
        <position position="253"/>
    </location>
</feature>
<feature type="sequence variant" id="VAR_040535" description="In dbSNP:rs55824414." evidence="10">
    <original>E</original>
    <variation>Q</variation>
    <location>
        <position position="309"/>
    </location>
</feature>
<feature type="sequence variant" id="VAR_040536" description="In dbSNP:rs56076641." evidence="10">
    <original>V</original>
    <variation>I</variation>
    <location>
        <position position="313"/>
    </location>
</feature>
<feature type="sequence variant" id="VAR_040537" description="In dbSNP:rs36009541." evidence="10">
    <original>E</original>
    <variation>G</variation>
    <location>
        <position position="443"/>
    </location>
</feature>
<feature type="sequence variant" id="VAR_040538" description="In dbSNP:rs33928105." evidence="10">
    <original>P</original>
    <variation>T</variation>
    <location>
        <position position="460"/>
    </location>
</feature>
<feature type="sequence variant" id="VAR_051624" description="In dbSNP:rs36004830.">
    <original>R</original>
    <variation>C</variation>
    <location>
        <position position="461"/>
    </location>
</feature>
<feature type="mutagenesis site" description="No effect on kinase activity. Increase kinase activity; when associated with A-36." evidence="9">
    <original>S</original>
    <variation>A</variation>
    <location>
        <position position="23"/>
    </location>
</feature>
<feature type="mutagenesis site" description="No effect on kinase activity. Increase kinase activity; when associated with A-23." evidence="9">
    <original>S</original>
    <variation>A</variation>
    <location>
        <position position="36"/>
    </location>
</feature>
<evidence type="ECO:0000250" key="1"/>
<evidence type="ECO:0000250" key="2">
    <source>
        <dbReference type="UniProtKB" id="Q8WMV0"/>
    </source>
</evidence>
<evidence type="ECO:0000255" key="3"/>
<evidence type="ECO:0000255" key="4">
    <source>
        <dbReference type="PROSITE-ProRule" id="PRU00159"/>
    </source>
</evidence>
<evidence type="ECO:0000255" key="5">
    <source>
        <dbReference type="PROSITE-ProRule" id="PRU00171"/>
    </source>
</evidence>
<evidence type="ECO:0000255" key="6">
    <source>
        <dbReference type="PROSITE-ProRule" id="PRU00618"/>
    </source>
</evidence>
<evidence type="ECO:0000255" key="7">
    <source>
        <dbReference type="PROSITE-ProRule" id="PRU10027"/>
    </source>
</evidence>
<evidence type="ECO:0000269" key="8">
    <source>
    </source>
</evidence>
<evidence type="ECO:0000269" key="9">
    <source>
    </source>
</evidence>
<evidence type="ECO:0000269" key="10">
    <source>
    </source>
</evidence>
<evidence type="ECO:0000269" key="11">
    <source>
    </source>
</evidence>
<evidence type="ECO:0000305" key="12"/>
<comment type="function">
    <text evidence="9">Retina-specific kinase involved in the shutoff of the photoresponse and adaptation to changing light conditions via cone opsin phosphorylation, including rhodopsin (RHO).</text>
</comment>
<comment type="catalytic activity">
    <reaction evidence="9">
        <text>L-threonyl-[rhodopsin] + ATP = O-phospho-L-threonyl-[rhodopsin] + ADP + H(+)</text>
        <dbReference type="Rhea" id="RHEA:56552"/>
        <dbReference type="Rhea" id="RHEA-COMP:14596"/>
        <dbReference type="Rhea" id="RHEA-COMP:14597"/>
        <dbReference type="ChEBI" id="CHEBI:15378"/>
        <dbReference type="ChEBI" id="CHEBI:30013"/>
        <dbReference type="ChEBI" id="CHEBI:30616"/>
        <dbReference type="ChEBI" id="CHEBI:61977"/>
        <dbReference type="ChEBI" id="CHEBI:456216"/>
        <dbReference type="EC" id="2.7.11.14"/>
    </reaction>
</comment>
<comment type="catalytic activity">
    <reaction evidence="9">
        <text>L-seryl-[rhodopsin] + ATP = O-phospho-L-seryl-[rhodopsin] + ADP + H(+)</text>
        <dbReference type="Rhea" id="RHEA:23356"/>
        <dbReference type="Rhea" id="RHEA-COMP:14594"/>
        <dbReference type="Rhea" id="RHEA-COMP:14595"/>
        <dbReference type="ChEBI" id="CHEBI:15378"/>
        <dbReference type="ChEBI" id="CHEBI:29999"/>
        <dbReference type="ChEBI" id="CHEBI:30616"/>
        <dbReference type="ChEBI" id="CHEBI:83421"/>
        <dbReference type="ChEBI" id="CHEBI:456216"/>
        <dbReference type="EC" id="2.7.11.14"/>
    </reaction>
</comment>
<comment type="activity regulation">
    <text evidence="1">Inhibited by phosphorylation of Ser-36.</text>
</comment>
<comment type="biophysicochemical properties">
    <kinetics>
        <KM evidence="9">1.9 uM for rhodopsin</KM>
        <KM evidence="9">21.4 uM for ATP</KM>
        <Vmax evidence="9">915.0 nmol/min/mg enzyme</Vmax>
    </kinetics>
</comment>
<comment type="subunit">
    <text evidence="2">Interacts (when prenylated) with PDE6D; this promotes release from membranes.</text>
</comment>
<comment type="interaction">
    <interactant intactId="EBI-6423032">
        <id>Q8WTQ7</id>
    </interactant>
    <interactant intactId="EBI-2557990">
        <id>Q0VG06</id>
        <label>FAAP100</label>
    </interactant>
    <organismsDiffer>false</organismsDiffer>
    <experiments>2</experiments>
</comment>
<comment type="interaction">
    <interactant intactId="EBI-6423032">
        <id>Q8WTQ7</id>
    </interactant>
    <interactant intactId="EBI-352572">
        <id>P08238</id>
        <label>HSP90AB1</label>
    </interactant>
    <organismsDiffer>false</organismsDiffer>
    <experiments>2</experiments>
</comment>
<comment type="interaction">
    <interactant intactId="EBI-6423032">
        <id>Q8WTQ7</id>
    </interactant>
    <interactant intactId="EBI-356498">
        <id>P62258</id>
        <label>YWHAE</label>
    </interactant>
    <organismsDiffer>false</organismsDiffer>
    <experiments>2</experiments>
</comment>
<comment type="subcellular location">
    <subcellularLocation>
        <location evidence="2">Membrane</location>
        <topology evidence="2">Lipid-anchor</topology>
    </subcellularLocation>
</comment>
<comment type="tissue specificity">
    <text evidence="8 11">Retinal cones, outer and inner segments.</text>
</comment>
<comment type="PTM">
    <text evidence="11">Autophosphorylated in vitro at Ser-490. Phosphorylation at Ser-36 is regulated by light and activated by cAMP.</text>
</comment>
<comment type="miscellaneous">
    <text>Although the protein is present in a diversity of vertebrates ranging from bony fish to mammals, the mouse and rat orthologous proteins do not exist.</text>
</comment>
<comment type="similarity">
    <text evidence="12">Belongs to the protein kinase superfamily. AGC Ser/Thr protein kinase family. GPRK subfamily.</text>
</comment>
<organism>
    <name type="scientific">Homo sapiens</name>
    <name type="common">Human</name>
    <dbReference type="NCBI Taxonomy" id="9606"/>
    <lineage>
        <taxon>Eukaryota</taxon>
        <taxon>Metazoa</taxon>
        <taxon>Chordata</taxon>
        <taxon>Craniata</taxon>
        <taxon>Vertebrata</taxon>
        <taxon>Euteleostomi</taxon>
        <taxon>Mammalia</taxon>
        <taxon>Eutheria</taxon>
        <taxon>Euarchontoglires</taxon>
        <taxon>Primates</taxon>
        <taxon>Haplorrhini</taxon>
        <taxon>Catarrhini</taxon>
        <taxon>Hominidae</taxon>
        <taxon>Homo</taxon>
    </lineage>
</organism>
<protein>
    <recommendedName>
        <fullName>Rhodopsin kinase GRK7</fullName>
        <ecNumber evidence="9">2.7.11.14</ecNumber>
    </recommendedName>
    <alternativeName>
        <fullName>G protein-coupled receptor kinase 7</fullName>
    </alternativeName>
    <alternativeName>
        <fullName>G protein-coupled receptor kinase GRK7</fullName>
    </alternativeName>
</protein>
<sequence>MVDMGALDNLIANTAYLQARKPSDCDSKELQRRRRSLALPGLQGCAELRQKLSLNFHSLCEQQPIGRRLFRDFLATVPTFRKAATFLEDVQNWELAEEGPTKDSALQGLVATCASAPAPGNPQPFLSQAVATKCQAATTEEERVAAVTLAKAEAMAFLQEQPFKDFVTSAFYDKFLQWKLFEMQPVSDKYFTEFRVLGKGGFGEVCAVQVKNTGKMYACKKLDKKRLKKKGGEKMALLEKEILEKVSSPFIVSLAYAFESKTHLCLVMSLMNGGDLKFHIYNVGTRGLDMSRVIFYSAQIACGMLHLHELGIVYRDMKPENVLLDDLGNCRLSDLGLAVEMKGGKPITQRAGTNGYMAPEILMEKVSYSYPVDWFAMGCSIYEMVAGRTPFKDYKEKVSKEDLKQRTLQDEVKFQHDNFTEEAKDICRLFLAKKPEQRLGSREKSDDPRKHHFFKTINFPRLEAGLIEPPFVPDPSVVYAKDIAEIDDFSEVRGVEFDDKDKQFFKNFATGAVPIAWQEEIIETGLFEELNDPNRPTGCEEGNSSKSGVCLLL</sequence>
<dbReference type="EC" id="2.7.11.14" evidence="9"/>
<dbReference type="EMBL" id="AF439409">
    <property type="protein sequence ID" value="AAL48216.1"/>
    <property type="molecule type" value="mRNA"/>
</dbReference>
<dbReference type="EMBL" id="AF282269">
    <property type="protein sequence ID" value="AAL33880.1"/>
    <property type="molecule type" value="mRNA"/>
</dbReference>
<dbReference type="EMBL" id="AC112504">
    <property type="status" value="NOT_ANNOTATED_CDS"/>
    <property type="molecule type" value="Genomic_DNA"/>
</dbReference>
<dbReference type="CCDS" id="CCDS3120.1"/>
<dbReference type="RefSeq" id="NP_631948.1">
    <property type="nucleotide sequence ID" value="NM_139209.3"/>
</dbReference>
<dbReference type="RefSeq" id="XP_016861206.1">
    <property type="nucleotide sequence ID" value="XM_017005717.1"/>
</dbReference>
<dbReference type="RefSeq" id="XP_047303405.1">
    <property type="nucleotide sequence ID" value="XM_047447449.1"/>
</dbReference>
<dbReference type="SMR" id="Q8WTQ7"/>
<dbReference type="BioGRID" id="126297">
    <property type="interactions" value="23"/>
</dbReference>
<dbReference type="FunCoup" id="Q8WTQ7">
    <property type="interactions" value="582"/>
</dbReference>
<dbReference type="IntAct" id="Q8WTQ7">
    <property type="interactions" value="22"/>
</dbReference>
<dbReference type="STRING" id="9606.ENSP00000264952"/>
<dbReference type="BindingDB" id="Q8WTQ7"/>
<dbReference type="ChEMBL" id="CHEMBL1075133"/>
<dbReference type="DrugCentral" id="Q8WTQ7"/>
<dbReference type="GuidetoPHARMACOLOGY" id="1471"/>
<dbReference type="GlyGen" id="Q8WTQ7">
    <property type="glycosylation" value="2 sites, 1 O-linked glycan (2 sites)"/>
</dbReference>
<dbReference type="iPTMnet" id="Q8WTQ7"/>
<dbReference type="PhosphoSitePlus" id="Q8WTQ7"/>
<dbReference type="BioMuta" id="GRK7"/>
<dbReference type="DMDM" id="21263659"/>
<dbReference type="jPOST" id="Q8WTQ7"/>
<dbReference type="MassIVE" id="Q8WTQ7"/>
<dbReference type="PaxDb" id="9606-ENSP00000264952"/>
<dbReference type="PeptideAtlas" id="Q8WTQ7"/>
<dbReference type="ProteomicsDB" id="74583"/>
<dbReference type="Antibodypedia" id="33484">
    <property type="antibodies" value="217 antibodies from 27 providers"/>
</dbReference>
<dbReference type="DNASU" id="131890"/>
<dbReference type="Ensembl" id="ENST00000264952.2">
    <property type="protein sequence ID" value="ENSP00000264952.2"/>
    <property type="gene ID" value="ENSG00000114124.3"/>
</dbReference>
<dbReference type="Ensembl" id="ENST00000682958.1">
    <property type="protein sequence ID" value="ENSP00000508022.1"/>
    <property type="gene ID" value="ENSG00000114124.3"/>
</dbReference>
<dbReference type="GeneID" id="131890"/>
<dbReference type="KEGG" id="hsa:131890"/>
<dbReference type="MANE-Select" id="ENST00000682958.1">
    <property type="protein sequence ID" value="ENSP00000508022.1"/>
    <property type="RefSeq nucleotide sequence ID" value="NM_139209.3"/>
    <property type="RefSeq protein sequence ID" value="NP_631948.1"/>
</dbReference>
<dbReference type="UCSC" id="uc011bnd.3">
    <property type="organism name" value="human"/>
</dbReference>
<dbReference type="AGR" id="HGNC:17031"/>
<dbReference type="CTD" id="131890"/>
<dbReference type="DisGeNET" id="131890"/>
<dbReference type="GeneCards" id="GRK7"/>
<dbReference type="HGNC" id="HGNC:17031">
    <property type="gene designation" value="GRK7"/>
</dbReference>
<dbReference type="HPA" id="ENSG00000114124">
    <property type="expression patterns" value="Tissue enriched (retina)"/>
</dbReference>
<dbReference type="MIM" id="606987">
    <property type="type" value="gene"/>
</dbReference>
<dbReference type="neXtProt" id="NX_Q8WTQ7"/>
<dbReference type="OpenTargets" id="ENSG00000114124"/>
<dbReference type="PharmGKB" id="PA38433"/>
<dbReference type="VEuPathDB" id="HostDB:ENSG00000114124"/>
<dbReference type="eggNOG" id="KOG0986">
    <property type="taxonomic scope" value="Eukaryota"/>
</dbReference>
<dbReference type="GeneTree" id="ENSGT00940000160511"/>
<dbReference type="HOGENOM" id="CLU_000288_63_41_1"/>
<dbReference type="InParanoid" id="Q8WTQ7"/>
<dbReference type="OMA" id="YFTEFRV"/>
<dbReference type="OrthoDB" id="354826at2759"/>
<dbReference type="PAN-GO" id="Q8WTQ7">
    <property type="GO annotations" value="4 GO annotations based on evolutionary models"/>
</dbReference>
<dbReference type="PhylomeDB" id="Q8WTQ7"/>
<dbReference type="TreeFam" id="TF313940"/>
<dbReference type="BRENDA" id="2.7.11.14">
    <property type="organism ID" value="2681"/>
</dbReference>
<dbReference type="PathwayCommons" id="Q8WTQ7"/>
<dbReference type="Reactome" id="R-HSA-2514859">
    <property type="pathway name" value="Inactivation, recovery and regulation of the phototransduction cascade"/>
</dbReference>
<dbReference type="SABIO-RK" id="Q8WTQ7"/>
<dbReference type="SignaLink" id="Q8WTQ7"/>
<dbReference type="SIGNOR" id="Q8WTQ7"/>
<dbReference type="BioGRID-ORCS" id="131890">
    <property type="hits" value="9 hits in 1154 CRISPR screens"/>
</dbReference>
<dbReference type="ChiTaRS" id="GRK7">
    <property type="organism name" value="human"/>
</dbReference>
<dbReference type="GenomeRNAi" id="131890"/>
<dbReference type="Pharos" id="Q8WTQ7">
    <property type="development level" value="Tchem"/>
</dbReference>
<dbReference type="PRO" id="PR:Q8WTQ7"/>
<dbReference type="Proteomes" id="UP000005640">
    <property type="component" value="Chromosome 3"/>
</dbReference>
<dbReference type="RNAct" id="Q8WTQ7">
    <property type="molecule type" value="protein"/>
</dbReference>
<dbReference type="Bgee" id="ENSG00000114124">
    <property type="expression patterns" value="Expressed in buccal mucosa cell and 29 other cell types or tissues"/>
</dbReference>
<dbReference type="GO" id="GO:0005737">
    <property type="term" value="C:cytoplasm"/>
    <property type="evidence" value="ECO:0000318"/>
    <property type="project" value="GO_Central"/>
</dbReference>
<dbReference type="GO" id="GO:0097381">
    <property type="term" value="C:photoreceptor disc membrane"/>
    <property type="evidence" value="ECO:0000304"/>
    <property type="project" value="Reactome"/>
</dbReference>
<dbReference type="GO" id="GO:0005524">
    <property type="term" value="F:ATP binding"/>
    <property type="evidence" value="ECO:0007669"/>
    <property type="project" value="UniProtKB-KW"/>
</dbReference>
<dbReference type="GO" id="GO:0050254">
    <property type="term" value="F:rhodopsin kinase activity"/>
    <property type="evidence" value="ECO:0000314"/>
    <property type="project" value="UniProtKB"/>
</dbReference>
<dbReference type="GO" id="GO:0046777">
    <property type="term" value="P:protein autophosphorylation"/>
    <property type="evidence" value="ECO:0000315"/>
    <property type="project" value="UniProtKB"/>
</dbReference>
<dbReference type="GO" id="GO:0022400">
    <property type="term" value="P:regulation of opsin-mediated signaling pathway"/>
    <property type="evidence" value="ECO:0000304"/>
    <property type="project" value="Reactome"/>
</dbReference>
<dbReference type="GO" id="GO:0009966">
    <property type="term" value="P:regulation of signal transduction"/>
    <property type="evidence" value="ECO:0000318"/>
    <property type="project" value="GO_Central"/>
</dbReference>
<dbReference type="GO" id="GO:0007165">
    <property type="term" value="P:signal transduction"/>
    <property type="evidence" value="ECO:0007669"/>
    <property type="project" value="InterPro"/>
</dbReference>
<dbReference type="GO" id="GO:0007601">
    <property type="term" value="P:visual perception"/>
    <property type="evidence" value="ECO:0007669"/>
    <property type="project" value="UniProtKB-KW"/>
</dbReference>
<dbReference type="CDD" id="cd08749">
    <property type="entry name" value="RGS_GRK7"/>
    <property type="match status" value="1"/>
</dbReference>
<dbReference type="CDD" id="cd05607">
    <property type="entry name" value="STKc_GRK7"/>
    <property type="match status" value="1"/>
</dbReference>
<dbReference type="FunFam" id="1.10.167.10:FF:000027">
    <property type="entry name" value="G protein-coupled receptor kinase"/>
    <property type="match status" value="1"/>
</dbReference>
<dbReference type="FunFam" id="1.10.510.10:FF:000074">
    <property type="entry name" value="G protein-coupled receptor kinase"/>
    <property type="match status" value="1"/>
</dbReference>
<dbReference type="Gene3D" id="3.30.200.20">
    <property type="entry name" value="Phosphorylase Kinase, domain 1"/>
    <property type="match status" value="1"/>
</dbReference>
<dbReference type="Gene3D" id="1.10.167.10">
    <property type="entry name" value="Regulator of G-protein Signalling 4, domain 2"/>
    <property type="match status" value="1"/>
</dbReference>
<dbReference type="Gene3D" id="1.10.510.10">
    <property type="entry name" value="Transferase(Phosphotransferase) domain 1"/>
    <property type="match status" value="1"/>
</dbReference>
<dbReference type="InterPro" id="IPR000961">
    <property type="entry name" value="AGC-kinase_C"/>
</dbReference>
<dbReference type="InterPro" id="IPR000239">
    <property type="entry name" value="GPCR_kinase"/>
</dbReference>
<dbReference type="InterPro" id="IPR011009">
    <property type="entry name" value="Kinase-like_dom_sf"/>
</dbReference>
<dbReference type="InterPro" id="IPR000719">
    <property type="entry name" value="Prot_kinase_dom"/>
</dbReference>
<dbReference type="InterPro" id="IPR017441">
    <property type="entry name" value="Protein_kinase_ATP_BS"/>
</dbReference>
<dbReference type="InterPro" id="IPR016137">
    <property type="entry name" value="RGS"/>
</dbReference>
<dbReference type="InterPro" id="IPR036305">
    <property type="entry name" value="RGS_sf"/>
</dbReference>
<dbReference type="InterPro" id="IPR044926">
    <property type="entry name" value="RGS_subdomain_2"/>
</dbReference>
<dbReference type="InterPro" id="IPR008271">
    <property type="entry name" value="Ser/Thr_kinase_AS"/>
</dbReference>
<dbReference type="PANTHER" id="PTHR24355">
    <property type="entry name" value="G PROTEIN-COUPLED RECEPTOR KINASE/RIBOSOMAL PROTEIN S6 KINASE"/>
    <property type="match status" value="1"/>
</dbReference>
<dbReference type="PANTHER" id="PTHR24355:SF12">
    <property type="entry name" value="RHODOPSIN KINASE GRK7"/>
    <property type="match status" value="1"/>
</dbReference>
<dbReference type="Pfam" id="PF00069">
    <property type="entry name" value="Pkinase"/>
    <property type="match status" value="1"/>
</dbReference>
<dbReference type="Pfam" id="PF00615">
    <property type="entry name" value="RGS"/>
    <property type="match status" value="1"/>
</dbReference>
<dbReference type="PRINTS" id="PR00717">
    <property type="entry name" value="GPCRKINASE"/>
</dbReference>
<dbReference type="SMART" id="SM00315">
    <property type="entry name" value="RGS"/>
    <property type="match status" value="1"/>
</dbReference>
<dbReference type="SMART" id="SM00133">
    <property type="entry name" value="S_TK_X"/>
    <property type="match status" value="1"/>
</dbReference>
<dbReference type="SMART" id="SM00220">
    <property type="entry name" value="S_TKc"/>
    <property type="match status" value="1"/>
</dbReference>
<dbReference type="SUPFAM" id="SSF56112">
    <property type="entry name" value="Protein kinase-like (PK-like)"/>
    <property type="match status" value="1"/>
</dbReference>
<dbReference type="SUPFAM" id="SSF48097">
    <property type="entry name" value="Regulator of G-protein signaling, RGS"/>
    <property type="match status" value="1"/>
</dbReference>
<dbReference type="PROSITE" id="PS51285">
    <property type="entry name" value="AGC_KINASE_CTER"/>
    <property type="match status" value="1"/>
</dbReference>
<dbReference type="PROSITE" id="PS00107">
    <property type="entry name" value="PROTEIN_KINASE_ATP"/>
    <property type="match status" value="1"/>
</dbReference>
<dbReference type="PROSITE" id="PS50011">
    <property type="entry name" value="PROTEIN_KINASE_DOM"/>
    <property type="match status" value="1"/>
</dbReference>
<dbReference type="PROSITE" id="PS00108">
    <property type="entry name" value="PROTEIN_KINASE_ST"/>
    <property type="match status" value="1"/>
</dbReference>
<dbReference type="PROSITE" id="PS50132">
    <property type="entry name" value="RGS"/>
    <property type="match status" value="1"/>
</dbReference>
<gene>
    <name type="primary">GRK7</name>
    <name type="synonym">GPRK7</name>
</gene>